<comment type="function">
    <text evidence="1">Mitochondrial transporter that mediates uptake of thiamine pyrophosphate (ThPP) into mitochondria.</text>
</comment>
<comment type="subcellular location">
    <subcellularLocation>
        <location evidence="1">Mitochondrion inner membrane</location>
        <topology evidence="1">Multi-pass membrane protein</topology>
    </subcellularLocation>
</comment>
<comment type="similarity">
    <text evidence="3">Belongs to the mitochondrial carrier (TC 2.A.29) family.</text>
</comment>
<sequence>MSSKHREDHLKRGSDVSPYESLFAGSVSGGVARAITAPLDTIKIRLQLQTKSHKHPHTQKVSALNVVKDLLKNEGVIALWKGNVPAEILYVMYGAVQFTTYSALSKSLSQMEKDYSIVMPSSVHSLLAGVGAGIASTLTTYPFDLLRTRLVANKKKNLLSMTGTFRKILHAEGISGLFAGIRPAMISVASTTGLMFWSYELAREFSSEYKHVPFIEGICGFVAGATSKGITFPLDTLRKRCQIYSEVYGTKYKSSLRIFMNIVSREGVLGLYRGYGVSILKTAPTSAISLWTYEYVISATRHYRLSKPLV</sequence>
<protein>
    <recommendedName>
        <fullName>Mitochondrial thiamine pyrophosphate carrier 1</fullName>
    </recommendedName>
</protein>
<gene>
    <name type="primary">TPC1</name>
    <name type="ORF">LELG_01926</name>
</gene>
<accession>A5DX39</accession>
<keyword id="KW-0472">Membrane</keyword>
<keyword id="KW-0496">Mitochondrion</keyword>
<keyword id="KW-0999">Mitochondrion inner membrane</keyword>
<keyword id="KW-1185">Reference proteome</keyword>
<keyword id="KW-0677">Repeat</keyword>
<keyword id="KW-0812">Transmembrane</keyword>
<keyword id="KW-1133">Transmembrane helix</keyword>
<keyword id="KW-0813">Transport</keyword>
<dbReference type="EMBL" id="CH981525">
    <property type="protein sequence ID" value="EDK43747.1"/>
    <property type="molecule type" value="Genomic_DNA"/>
</dbReference>
<dbReference type="RefSeq" id="XP_001527097.1">
    <property type="nucleotide sequence ID" value="XM_001527047.1"/>
</dbReference>
<dbReference type="SMR" id="A5DX39"/>
<dbReference type="FunCoup" id="A5DX39">
    <property type="interactions" value="31"/>
</dbReference>
<dbReference type="STRING" id="379508.A5DX39"/>
<dbReference type="GeneID" id="5234516"/>
<dbReference type="KEGG" id="lel:PVL30_001896"/>
<dbReference type="VEuPathDB" id="FungiDB:LELG_01926"/>
<dbReference type="eggNOG" id="KOG0752">
    <property type="taxonomic scope" value="Eukaryota"/>
</dbReference>
<dbReference type="HOGENOM" id="CLU_015166_10_3_1"/>
<dbReference type="InParanoid" id="A5DX39"/>
<dbReference type="OMA" id="MYVCYGA"/>
<dbReference type="OrthoDB" id="18574at2759"/>
<dbReference type="Proteomes" id="UP000001996">
    <property type="component" value="Unassembled WGS sequence"/>
</dbReference>
<dbReference type="GO" id="GO:0005743">
    <property type="term" value="C:mitochondrial inner membrane"/>
    <property type="evidence" value="ECO:0007669"/>
    <property type="project" value="UniProtKB-SubCell"/>
</dbReference>
<dbReference type="GO" id="GO:0090422">
    <property type="term" value="F:thiamine pyrophosphate transmembrane transporter activity"/>
    <property type="evidence" value="ECO:0007669"/>
    <property type="project" value="EnsemblFungi"/>
</dbReference>
<dbReference type="GO" id="GO:1990545">
    <property type="term" value="P:mitochondrial thiamine pyrophosphate transmembrane transport"/>
    <property type="evidence" value="ECO:0007669"/>
    <property type="project" value="EnsemblFungi"/>
</dbReference>
<dbReference type="Gene3D" id="1.50.40.10">
    <property type="entry name" value="Mitochondrial carrier domain"/>
    <property type="match status" value="1"/>
</dbReference>
<dbReference type="InterPro" id="IPR002067">
    <property type="entry name" value="Mit_carrier"/>
</dbReference>
<dbReference type="InterPro" id="IPR018108">
    <property type="entry name" value="Mitochondrial_sb/sol_carrier"/>
</dbReference>
<dbReference type="InterPro" id="IPR023395">
    <property type="entry name" value="Mt_carrier_dom_sf"/>
</dbReference>
<dbReference type="PANTHER" id="PTHR24089">
    <property type="entry name" value="SOLUTE CARRIER FAMILY 25"/>
    <property type="match status" value="1"/>
</dbReference>
<dbReference type="Pfam" id="PF00153">
    <property type="entry name" value="Mito_carr"/>
    <property type="match status" value="3"/>
</dbReference>
<dbReference type="PRINTS" id="PR00926">
    <property type="entry name" value="MITOCARRIER"/>
</dbReference>
<dbReference type="SUPFAM" id="SSF103506">
    <property type="entry name" value="Mitochondrial carrier"/>
    <property type="match status" value="1"/>
</dbReference>
<dbReference type="PROSITE" id="PS50920">
    <property type="entry name" value="SOLCAR"/>
    <property type="match status" value="3"/>
</dbReference>
<evidence type="ECO:0000250" key="1"/>
<evidence type="ECO:0000255" key="2"/>
<evidence type="ECO:0000305" key="3"/>
<organism>
    <name type="scientific">Lodderomyces elongisporus (strain ATCC 11503 / CBS 2605 / JCM 1781 / NBRC 1676 / NRRL YB-4239)</name>
    <name type="common">Yeast</name>
    <name type="synonym">Saccharomyces elongisporus</name>
    <dbReference type="NCBI Taxonomy" id="379508"/>
    <lineage>
        <taxon>Eukaryota</taxon>
        <taxon>Fungi</taxon>
        <taxon>Dikarya</taxon>
        <taxon>Ascomycota</taxon>
        <taxon>Saccharomycotina</taxon>
        <taxon>Pichiomycetes</taxon>
        <taxon>Debaryomycetaceae</taxon>
        <taxon>Candida/Lodderomyces clade</taxon>
        <taxon>Lodderomyces</taxon>
    </lineage>
</organism>
<proteinExistence type="inferred from homology"/>
<feature type="chain" id="PRO_0000320467" description="Mitochondrial thiamine pyrophosphate carrier 1">
    <location>
        <begin position="1"/>
        <end position="310"/>
    </location>
</feature>
<feature type="transmembrane region" description="Helical; Name=1" evidence="2">
    <location>
        <begin position="16"/>
        <end position="32"/>
    </location>
</feature>
<feature type="transmembrane region" description="Helical; Name=2" evidence="2">
    <location>
        <begin position="88"/>
        <end position="104"/>
    </location>
</feature>
<feature type="transmembrane region" description="Helical; Name=3" evidence="2">
    <location>
        <begin position="117"/>
        <end position="141"/>
    </location>
</feature>
<feature type="transmembrane region" description="Helical; Name=4" evidence="2">
    <location>
        <begin position="173"/>
        <end position="197"/>
    </location>
</feature>
<feature type="transmembrane region" description="Helical; Name=5" evidence="2">
    <location>
        <begin position="218"/>
        <end position="234"/>
    </location>
</feature>
<feature type="transmembrane region" description="Helical; Name=6" evidence="2">
    <location>
        <begin position="274"/>
        <end position="291"/>
    </location>
</feature>
<feature type="repeat" description="Solcar 1">
    <location>
        <begin position="16"/>
        <end position="107"/>
    </location>
</feature>
<feature type="repeat" description="Solcar 2">
    <location>
        <begin position="120"/>
        <end position="205"/>
    </location>
</feature>
<feature type="repeat" description="Solcar 3">
    <location>
        <begin position="211"/>
        <end position="299"/>
    </location>
</feature>
<name>TPC1_LODEL</name>
<reference key="1">
    <citation type="journal article" date="2009" name="Nature">
        <title>Evolution of pathogenicity and sexual reproduction in eight Candida genomes.</title>
        <authorList>
            <person name="Butler G."/>
            <person name="Rasmussen M.D."/>
            <person name="Lin M.F."/>
            <person name="Santos M.A.S."/>
            <person name="Sakthikumar S."/>
            <person name="Munro C.A."/>
            <person name="Rheinbay E."/>
            <person name="Grabherr M."/>
            <person name="Forche A."/>
            <person name="Reedy J.L."/>
            <person name="Agrafioti I."/>
            <person name="Arnaud M.B."/>
            <person name="Bates S."/>
            <person name="Brown A.J.P."/>
            <person name="Brunke S."/>
            <person name="Costanzo M.C."/>
            <person name="Fitzpatrick D.A."/>
            <person name="de Groot P.W.J."/>
            <person name="Harris D."/>
            <person name="Hoyer L.L."/>
            <person name="Hube B."/>
            <person name="Klis F.M."/>
            <person name="Kodira C."/>
            <person name="Lennard N."/>
            <person name="Logue M.E."/>
            <person name="Martin R."/>
            <person name="Neiman A.M."/>
            <person name="Nikolaou E."/>
            <person name="Quail M.A."/>
            <person name="Quinn J."/>
            <person name="Santos M.C."/>
            <person name="Schmitzberger F.F."/>
            <person name="Sherlock G."/>
            <person name="Shah P."/>
            <person name="Silverstein K.A.T."/>
            <person name="Skrzypek M.S."/>
            <person name="Soll D."/>
            <person name="Staggs R."/>
            <person name="Stansfield I."/>
            <person name="Stumpf M.P.H."/>
            <person name="Sudbery P.E."/>
            <person name="Srikantha T."/>
            <person name="Zeng Q."/>
            <person name="Berman J."/>
            <person name="Berriman M."/>
            <person name="Heitman J."/>
            <person name="Gow N.A.R."/>
            <person name="Lorenz M.C."/>
            <person name="Birren B.W."/>
            <person name="Kellis M."/>
            <person name="Cuomo C.A."/>
        </authorList>
    </citation>
    <scope>NUCLEOTIDE SEQUENCE [LARGE SCALE GENOMIC DNA]</scope>
    <source>
        <strain>ATCC 11503 / BCRC 21390 / CBS 2605 / JCM 1781 / NBRC 1676 / NRRL YB-4239</strain>
    </source>
</reference>